<gene>
    <name evidence="1" type="primary">trpD</name>
    <name type="ordered locus">PSEEN0448</name>
</gene>
<accession>Q1IG00</accession>
<sequence length="349" mass="37181">MDIKSALSRIVGHLDLSTEEMRDVMRQIMTGQCSEAQIGAFLMGMRMKSESIDEIVGAVSVMRELADKVELKSLDGVVDIVGTGGDGANIFNVSTASAFVIAAAGCTVAKHGNRAVSGKSGSADLLEAAGIYLNLTPVQVARCIDSLGIGFMFAQTHHSAMKHAAGPRRDLGLRTLFNMLGPLTNPAGVKHQVVGVFTQALCRPLAEVLQRLGSKHVLVVHSKDGLDEFSLAAPTFVAELKNDQITEYWVEPEDLGMKSQSLHGLAVEGPQASLELIRDALGRRKTENGQKAAEMIVLNAGAALYAADHAMTLAQGVELAHDVLHTGLAWEKLQELGAFTAVFKVENEA</sequence>
<name>TRPD_PSEE4</name>
<protein>
    <recommendedName>
        <fullName evidence="1">Anthranilate phosphoribosyltransferase</fullName>
        <ecNumber evidence="1">2.4.2.18</ecNumber>
    </recommendedName>
</protein>
<keyword id="KW-0028">Amino-acid biosynthesis</keyword>
<keyword id="KW-0057">Aromatic amino acid biosynthesis</keyword>
<keyword id="KW-0328">Glycosyltransferase</keyword>
<keyword id="KW-0460">Magnesium</keyword>
<keyword id="KW-0479">Metal-binding</keyword>
<keyword id="KW-0808">Transferase</keyword>
<keyword id="KW-0822">Tryptophan biosynthesis</keyword>
<dbReference type="EC" id="2.4.2.18" evidence="1"/>
<dbReference type="EMBL" id="CT573326">
    <property type="protein sequence ID" value="CAK13402.1"/>
    <property type="molecule type" value="Genomic_DNA"/>
</dbReference>
<dbReference type="RefSeq" id="WP_011531859.1">
    <property type="nucleotide sequence ID" value="NC_008027.1"/>
</dbReference>
<dbReference type="SMR" id="Q1IG00"/>
<dbReference type="STRING" id="384676.PSEEN0448"/>
<dbReference type="GeneID" id="32803782"/>
<dbReference type="KEGG" id="pen:PSEEN0448"/>
<dbReference type="eggNOG" id="COG0547">
    <property type="taxonomic scope" value="Bacteria"/>
</dbReference>
<dbReference type="HOGENOM" id="CLU_034315_2_1_6"/>
<dbReference type="OrthoDB" id="9806430at2"/>
<dbReference type="UniPathway" id="UPA00035">
    <property type="reaction ID" value="UER00041"/>
</dbReference>
<dbReference type="Proteomes" id="UP000000658">
    <property type="component" value="Chromosome"/>
</dbReference>
<dbReference type="GO" id="GO:0005829">
    <property type="term" value="C:cytosol"/>
    <property type="evidence" value="ECO:0007669"/>
    <property type="project" value="TreeGrafter"/>
</dbReference>
<dbReference type="GO" id="GO:0004048">
    <property type="term" value="F:anthranilate phosphoribosyltransferase activity"/>
    <property type="evidence" value="ECO:0007669"/>
    <property type="project" value="UniProtKB-UniRule"/>
</dbReference>
<dbReference type="GO" id="GO:0000287">
    <property type="term" value="F:magnesium ion binding"/>
    <property type="evidence" value="ECO:0007669"/>
    <property type="project" value="UniProtKB-UniRule"/>
</dbReference>
<dbReference type="GO" id="GO:0000162">
    <property type="term" value="P:L-tryptophan biosynthetic process"/>
    <property type="evidence" value="ECO:0007669"/>
    <property type="project" value="UniProtKB-UniRule"/>
</dbReference>
<dbReference type="FunFam" id="1.20.970.10:FF:000006">
    <property type="entry name" value="Anthranilate phosphoribosyltransferase"/>
    <property type="match status" value="1"/>
</dbReference>
<dbReference type="FunFam" id="3.40.1030.10:FF:000002">
    <property type="entry name" value="Anthranilate phosphoribosyltransferase"/>
    <property type="match status" value="1"/>
</dbReference>
<dbReference type="Gene3D" id="3.40.1030.10">
    <property type="entry name" value="Nucleoside phosphorylase/phosphoribosyltransferase catalytic domain"/>
    <property type="match status" value="1"/>
</dbReference>
<dbReference type="Gene3D" id="1.20.970.10">
    <property type="entry name" value="Transferase, Pyrimidine Nucleoside Phosphorylase, Chain C"/>
    <property type="match status" value="1"/>
</dbReference>
<dbReference type="HAMAP" id="MF_00211">
    <property type="entry name" value="TrpD"/>
    <property type="match status" value="1"/>
</dbReference>
<dbReference type="InterPro" id="IPR005940">
    <property type="entry name" value="Anthranilate_Pribosyl_Tfrase"/>
</dbReference>
<dbReference type="InterPro" id="IPR000312">
    <property type="entry name" value="Glycosyl_Trfase_fam3"/>
</dbReference>
<dbReference type="InterPro" id="IPR017459">
    <property type="entry name" value="Glycosyl_Trfase_fam3_N_dom"/>
</dbReference>
<dbReference type="InterPro" id="IPR036320">
    <property type="entry name" value="Glycosyl_Trfase_fam3_N_dom_sf"/>
</dbReference>
<dbReference type="InterPro" id="IPR035902">
    <property type="entry name" value="Nuc_phospho_transferase"/>
</dbReference>
<dbReference type="NCBIfam" id="TIGR01245">
    <property type="entry name" value="trpD"/>
    <property type="match status" value="1"/>
</dbReference>
<dbReference type="PANTHER" id="PTHR43285">
    <property type="entry name" value="ANTHRANILATE PHOSPHORIBOSYLTRANSFERASE"/>
    <property type="match status" value="1"/>
</dbReference>
<dbReference type="PANTHER" id="PTHR43285:SF2">
    <property type="entry name" value="ANTHRANILATE PHOSPHORIBOSYLTRANSFERASE"/>
    <property type="match status" value="1"/>
</dbReference>
<dbReference type="Pfam" id="PF02885">
    <property type="entry name" value="Glycos_trans_3N"/>
    <property type="match status" value="1"/>
</dbReference>
<dbReference type="Pfam" id="PF00591">
    <property type="entry name" value="Glycos_transf_3"/>
    <property type="match status" value="1"/>
</dbReference>
<dbReference type="SUPFAM" id="SSF52418">
    <property type="entry name" value="Nucleoside phosphorylase/phosphoribosyltransferase catalytic domain"/>
    <property type="match status" value="1"/>
</dbReference>
<dbReference type="SUPFAM" id="SSF47648">
    <property type="entry name" value="Nucleoside phosphorylase/phosphoribosyltransferase N-terminal domain"/>
    <property type="match status" value="1"/>
</dbReference>
<organism>
    <name type="scientific">Pseudomonas entomophila (strain L48)</name>
    <dbReference type="NCBI Taxonomy" id="384676"/>
    <lineage>
        <taxon>Bacteria</taxon>
        <taxon>Pseudomonadati</taxon>
        <taxon>Pseudomonadota</taxon>
        <taxon>Gammaproteobacteria</taxon>
        <taxon>Pseudomonadales</taxon>
        <taxon>Pseudomonadaceae</taxon>
        <taxon>Pseudomonas</taxon>
    </lineage>
</organism>
<feature type="chain" id="PRO_1000043049" description="Anthranilate phosphoribosyltransferase">
    <location>
        <begin position="1"/>
        <end position="349"/>
    </location>
</feature>
<feature type="binding site" evidence="1">
    <location>
        <position position="82"/>
    </location>
    <ligand>
        <name>5-phospho-alpha-D-ribose 1-diphosphate</name>
        <dbReference type="ChEBI" id="CHEBI:58017"/>
    </ligand>
</feature>
<feature type="binding site" evidence="1">
    <location>
        <position position="82"/>
    </location>
    <ligand>
        <name>anthranilate</name>
        <dbReference type="ChEBI" id="CHEBI:16567"/>
        <label>1</label>
    </ligand>
</feature>
<feature type="binding site" evidence="1">
    <location>
        <begin position="85"/>
        <end position="86"/>
    </location>
    <ligand>
        <name>5-phospho-alpha-D-ribose 1-diphosphate</name>
        <dbReference type="ChEBI" id="CHEBI:58017"/>
    </ligand>
</feature>
<feature type="binding site" evidence="1">
    <location>
        <begin position="92"/>
        <end position="95"/>
    </location>
    <ligand>
        <name>5-phospho-alpha-D-ribose 1-diphosphate</name>
        <dbReference type="ChEBI" id="CHEBI:58017"/>
    </ligand>
</feature>
<feature type="binding site" evidence="1">
    <location>
        <position position="94"/>
    </location>
    <ligand>
        <name>Mg(2+)</name>
        <dbReference type="ChEBI" id="CHEBI:18420"/>
        <label>1</label>
    </ligand>
</feature>
<feature type="binding site" evidence="1">
    <location>
        <begin position="110"/>
        <end position="118"/>
    </location>
    <ligand>
        <name>5-phospho-alpha-D-ribose 1-diphosphate</name>
        <dbReference type="ChEBI" id="CHEBI:58017"/>
    </ligand>
</feature>
<feature type="binding site" evidence="1">
    <location>
        <position position="113"/>
    </location>
    <ligand>
        <name>anthranilate</name>
        <dbReference type="ChEBI" id="CHEBI:16567"/>
        <label>1</label>
    </ligand>
</feature>
<feature type="binding site" evidence="1">
    <location>
        <position position="122"/>
    </location>
    <ligand>
        <name>5-phospho-alpha-D-ribose 1-diphosphate</name>
        <dbReference type="ChEBI" id="CHEBI:58017"/>
    </ligand>
</feature>
<feature type="binding site" evidence="1">
    <location>
        <position position="168"/>
    </location>
    <ligand>
        <name>anthranilate</name>
        <dbReference type="ChEBI" id="CHEBI:16567"/>
        <label>2</label>
    </ligand>
</feature>
<feature type="binding site" evidence="1">
    <location>
        <position position="227"/>
    </location>
    <ligand>
        <name>Mg(2+)</name>
        <dbReference type="ChEBI" id="CHEBI:18420"/>
        <label>2</label>
    </ligand>
</feature>
<feature type="binding site" evidence="1">
    <location>
        <position position="228"/>
    </location>
    <ligand>
        <name>Mg(2+)</name>
        <dbReference type="ChEBI" id="CHEBI:18420"/>
        <label>1</label>
    </ligand>
</feature>
<feature type="binding site" evidence="1">
    <location>
        <position position="228"/>
    </location>
    <ligand>
        <name>Mg(2+)</name>
        <dbReference type="ChEBI" id="CHEBI:18420"/>
        <label>2</label>
    </ligand>
</feature>
<proteinExistence type="inferred from homology"/>
<comment type="function">
    <text evidence="1">Catalyzes the transfer of the phosphoribosyl group of 5-phosphorylribose-1-pyrophosphate (PRPP) to anthranilate to yield N-(5'-phosphoribosyl)-anthranilate (PRA).</text>
</comment>
<comment type="catalytic activity">
    <reaction evidence="1">
        <text>N-(5-phospho-beta-D-ribosyl)anthranilate + diphosphate = 5-phospho-alpha-D-ribose 1-diphosphate + anthranilate</text>
        <dbReference type="Rhea" id="RHEA:11768"/>
        <dbReference type="ChEBI" id="CHEBI:16567"/>
        <dbReference type="ChEBI" id="CHEBI:18277"/>
        <dbReference type="ChEBI" id="CHEBI:33019"/>
        <dbReference type="ChEBI" id="CHEBI:58017"/>
        <dbReference type="EC" id="2.4.2.18"/>
    </reaction>
</comment>
<comment type="cofactor">
    <cofactor evidence="1">
        <name>Mg(2+)</name>
        <dbReference type="ChEBI" id="CHEBI:18420"/>
    </cofactor>
    <text evidence="1">Binds 2 magnesium ions per monomer.</text>
</comment>
<comment type="pathway">
    <text evidence="1">Amino-acid biosynthesis; L-tryptophan biosynthesis; L-tryptophan from chorismate: step 2/5.</text>
</comment>
<comment type="subunit">
    <text evidence="1">Homodimer.</text>
</comment>
<comment type="similarity">
    <text evidence="1">Belongs to the anthranilate phosphoribosyltransferase family.</text>
</comment>
<evidence type="ECO:0000255" key="1">
    <source>
        <dbReference type="HAMAP-Rule" id="MF_00211"/>
    </source>
</evidence>
<reference key="1">
    <citation type="journal article" date="2006" name="Nat. Biotechnol.">
        <title>Complete genome sequence of the entomopathogenic and metabolically versatile soil bacterium Pseudomonas entomophila.</title>
        <authorList>
            <person name="Vodovar N."/>
            <person name="Vallenet D."/>
            <person name="Cruveiller S."/>
            <person name="Rouy Z."/>
            <person name="Barbe V."/>
            <person name="Acosta C."/>
            <person name="Cattolico L."/>
            <person name="Jubin C."/>
            <person name="Lajus A."/>
            <person name="Segurens B."/>
            <person name="Vacherie B."/>
            <person name="Wincker P."/>
            <person name="Weissenbach J."/>
            <person name="Lemaitre B."/>
            <person name="Medigue C."/>
            <person name="Boccard F."/>
        </authorList>
    </citation>
    <scope>NUCLEOTIDE SEQUENCE [LARGE SCALE GENOMIC DNA]</scope>
    <source>
        <strain>L48</strain>
    </source>
</reference>